<sequence length="921" mass="104664">MEYKNTLLMPKTEFPMRGNLPKREPAMQEKWAEMNIYEKVQEHTKGRPLFVLHDGPPYANGDIHMGHALNKVLKDFIVRYKSMTGFCAPYVPGWDTHGLPIEQALTNKGVKRKEMTVAEFRKLCAEYAYEQVERQREQFKRLGVRADWDNPYITLEPAYEAQQIKVFGDMAKKGYIYKGQKPVYWSPTSESALAEAEIEYQDKKSASIYVAFPVKDGKNVLEGDEKYIIWTTTPWTLPANLGISVHPELEYAIVKVNDEKYIIASELFETVAKTLEWENAEVVKTVKGSELEYTVAKHPFYDRDSLVMLGDHVTTDAGTGCVHTAPGHGEDDFVVGKKYGLEVLCPVDDKGVLTEEAPGFEGLFYDKANKPITEKLEEVGALLKLTFITHSYPHDWRTKKPIIFRATAQWFASIEAFRKELLEAVAETKWVPAWGETRLHNMVRDRGDWCISRQRAWGVPIPVFYAENGDPIITDETINHVADLFREHGSNVWFEREAKDLLPEGFTHPGSPNGEFRKETDIMDVWFDSGSSHQAVLEERDDLQRPADLYLEGSDQYRGWFNSSLSTAVAVTGKAPYKGVLSHGFVLDGEGRKMSKSIGNIVVPKKIMDQLGGDILRLWVSSVDYQSDVRISDDILKQVAEVYRKIRNTFRFLLGNLDDFKPSENTVAVAELREVDRYMLVKLNDLITKVKEAYETYDFAAVYHAIHNFCTIDLSSFYLDFAKDILYIEGANHEDRRAIQTVLYDVLVALTKLVTPILPHTADEVWPYIPGVTEESVQLTDMPEAVQLDDAEALKTKWDAFMTLRDDVLKALEVARNEKVIGKSLNASITLYPTAEMKTMLESINEDLKQLFIVSEYKLGGMMEEAPADAPKYEHTAVVVAQATGETCERCWVVSETIGKDAEHETLCERCATVVKENYVK</sequence>
<feature type="chain" id="PRO_1000189125" description="Isoleucine--tRNA ligase">
    <location>
        <begin position="1"/>
        <end position="921"/>
    </location>
</feature>
<feature type="short sequence motif" description="'HIGH' region">
    <location>
        <begin position="57"/>
        <end position="67"/>
    </location>
</feature>
<feature type="short sequence motif" description="'KMSKS' region">
    <location>
        <begin position="593"/>
        <end position="597"/>
    </location>
</feature>
<feature type="binding site" evidence="1">
    <location>
        <position position="552"/>
    </location>
    <ligand>
        <name>L-isoleucyl-5'-AMP</name>
        <dbReference type="ChEBI" id="CHEBI:178002"/>
    </ligand>
</feature>
<feature type="binding site" evidence="1">
    <location>
        <position position="596"/>
    </location>
    <ligand>
        <name>ATP</name>
        <dbReference type="ChEBI" id="CHEBI:30616"/>
    </ligand>
</feature>
<feature type="binding site" evidence="1">
    <location>
        <position position="888"/>
    </location>
    <ligand>
        <name>Zn(2+)</name>
        <dbReference type="ChEBI" id="CHEBI:29105"/>
    </ligand>
</feature>
<feature type="binding site" evidence="1">
    <location>
        <position position="891"/>
    </location>
    <ligand>
        <name>Zn(2+)</name>
        <dbReference type="ChEBI" id="CHEBI:29105"/>
    </ligand>
</feature>
<feature type="binding site" evidence="1">
    <location>
        <position position="908"/>
    </location>
    <ligand>
        <name>Zn(2+)</name>
        <dbReference type="ChEBI" id="CHEBI:29105"/>
    </ligand>
</feature>
<feature type="binding site" evidence="1">
    <location>
        <position position="911"/>
    </location>
    <ligand>
        <name>Zn(2+)</name>
        <dbReference type="ChEBI" id="CHEBI:29105"/>
    </ligand>
</feature>
<protein>
    <recommendedName>
        <fullName evidence="1">Isoleucine--tRNA ligase</fullName>
        <ecNumber evidence="1">6.1.1.5</ecNumber>
    </recommendedName>
    <alternativeName>
        <fullName evidence="1">Isoleucyl-tRNA synthetase</fullName>
        <shortName evidence="1">IleRS</shortName>
    </alternativeName>
</protein>
<gene>
    <name evidence="1" type="primary">ileS</name>
    <name type="ordered locus">BCA_3999</name>
</gene>
<keyword id="KW-0030">Aminoacyl-tRNA synthetase</keyword>
<keyword id="KW-0067">ATP-binding</keyword>
<keyword id="KW-0963">Cytoplasm</keyword>
<keyword id="KW-0436">Ligase</keyword>
<keyword id="KW-0479">Metal-binding</keyword>
<keyword id="KW-0547">Nucleotide-binding</keyword>
<keyword id="KW-0648">Protein biosynthesis</keyword>
<keyword id="KW-0862">Zinc</keyword>
<dbReference type="EC" id="6.1.1.5" evidence="1"/>
<dbReference type="EMBL" id="CP001407">
    <property type="protein sequence ID" value="ACO29635.1"/>
    <property type="molecule type" value="Genomic_DNA"/>
</dbReference>
<dbReference type="SMR" id="C1EPQ9"/>
<dbReference type="KEGG" id="bcx:BCA_3999"/>
<dbReference type="PATRIC" id="fig|572264.18.peg.3952"/>
<dbReference type="Proteomes" id="UP000002210">
    <property type="component" value="Chromosome"/>
</dbReference>
<dbReference type="GO" id="GO:0005829">
    <property type="term" value="C:cytosol"/>
    <property type="evidence" value="ECO:0007669"/>
    <property type="project" value="TreeGrafter"/>
</dbReference>
<dbReference type="GO" id="GO:0002161">
    <property type="term" value="F:aminoacyl-tRNA deacylase activity"/>
    <property type="evidence" value="ECO:0007669"/>
    <property type="project" value="InterPro"/>
</dbReference>
<dbReference type="GO" id="GO:0005524">
    <property type="term" value="F:ATP binding"/>
    <property type="evidence" value="ECO:0007669"/>
    <property type="project" value="UniProtKB-UniRule"/>
</dbReference>
<dbReference type="GO" id="GO:0004822">
    <property type="term" value="F:isoleucine-tRNA ligase activity"/>
    <property type="evidence" value="ECO:0007669"/>
    <property type="project" value="UniProtKB-UniRule"/>
</dbReference>
<dbReference type="GO" id="GO:0000049">
    <property type="term" value="F:tRNA binding"/>
    <property type="evidence" value="ECO:0007669"/>
    <property type="project" value="InterPro"/>
</dbReference>
<dbReference type="GO" id="GO:0008270">
    <property type="term" value="F:zinc ion binding"/>
    <property type="evidence" value="ECO:0007669"/>
    <property type="project" value="UniProtKB-UniRule"/>
</dbReference>
<dbReference type="GO" id="GO:0006428">
    <property type="term" value="P:isoleucyl-tRNA aminoacylation"/>
    <property type="evidence" value="ECO:0007669"/>
    <property type="project" value="UniProtKB-UniRule"/>
</dbReference>
<dbReference type="CDD" id="cd07960">
    <property type="entry name" value="Anticodon_Ia_Ile_BEm"/>
    <property type="match status" value="1"/>
</dbReference>
<dbReference type="CDD" id="cd00818">
    <property type="entry name" value="IleRS_core"/>
    <property type="match status" value="1"/>
</dbReference>
<dbReference type="FunFam" id="1.10.10.830:FF:000001">
    <property type="entry name" value="Isoleucine--tRNA ligase"/>
    <property type="match status" value="1"/>
</dbReference>
<dbReference type="FunFam" id="1.10.730.20:FF:000001">
    <property type="entry name" value="Isoleucine--tRNA ligase"/>
    <property type="match status" value="1"/>
</dbReference>
<dbReference type="FunFam" id="3.40.50.620:FF:000152">
    <property type="entry name" value="Isoleucine--tRNA ligase"/>
    <property type="match status" value="1"/>
</dbReference>
<dbReference type="FunFam" id="3.90.740.10:FF:000006">
    <property type="entry name" value="Isoleucine--tRNA ligase"/>
    <property type="match status" value="1"/>
</dbReference>
<dbReference type="Gene3D" id="1.10.730.20">
    <property type="match status" value="1"/>
</dbReference>
<dbReference type="Gene3D" id="3.40.50.620">
    <property type="entry name" value="HUPs"/>
    <property type="match status" value="2"/>
</dbReference>
<dbReference type="Gene3D" id="1.10.10.830">
    <property type="entry name" value="Ile-tRNA synthetase CP2 domain-like"/>
    <property type="match status" value="1"/>
</dbReference>
<dbReference type="Gene3D" id="3.90.740.10">
    <property type="entry name" value="Valyl/Leucyl/Isoleucyl-tRNA synthetase, editing domain"/>
    <property type="match status" value="1"/>
</dbReference>
<dbReference type="HAMAP" id="MF_02002">
    <property type="entry name" value="Ile_tRNA_synth_type1"/>
    <property type="match status" value="1"/>
</dbReference>
<dbReference type="InterPro" id="IPR001412">
    <property type="entry name" value="aa-tRNA-synth_I_CS"/>
</dbReference>
<dbReference type="InterPro" id="IPR002300">
    <property type="entry name" value="aa-tRNA-synth_Ia"/>
</dbReference>
<dbReference type="InterPro" id="IPR033708">
    <property type="entry name" value="Anticodon_Ile_BEm"/>
</dbReference>
<dbReference type="InterPro" id="IPR002301">
    <property type="entry name" value="Ile-tRNA-ligase"/>
</dbReference>
<dbReference type="InterPro" id="IPR023585">
    <property type="entry name" value="Ile-tRNA-ligase_type1"/>
</dbReference>
<dbReference type="InterPro" id="IPR050081">
    <property type="entry name" value="Ile-tRNA_ligase"/>
</dbReference>
<dbReference type="InterPro" id="IPR013155">
    <property type="entry name" value="M/V/L/I-tRNA-synth_anticd-bd"/>
</dbReference>
<dbReference type="InterPro" id="IPR014729">
    <property type="entry name" value="Rossmann-like_a/b/a_fold"/>
</dbReference>
<dbReference type="InterPro" id="IPR009080">
    <property type="entry name" value="tRNAsynth_Ia_anticodon-bd"/>
</dbReference>
<dbReference type="InterPro" id="IPR009008">
    <property type="entry name" value="Val/Leu/Ile-tRNA-synth_edit"/>
</dbReference>
<dbReference type="InterPro" id="IPR010663">
    <property type="entry name" value="Znf_FPG/IleRS"/>
</dbReference>
<dbReference type="NCBIfam" id="TIGR00392">
    <property type="entry name" value="ileS"/>
    <property type="match status" value="1"/>
</dbReference>
<dbReference type="PANTHER" id="PTHR42765:SF1">
    <property type="entry name" value="ISOLEUCINE--TRNA LIGASE, MITOCHONDRIAL"/>
    <property type="match status" value="1"/>
</dbReference>
<dbReference type="PANTHER" id="PTHR42765">
    <property type="entry name" value="SOLEUCYL-TRNA SYNTHETASE"/>
    <property type="match status" value="1"/>
</dbReference>
<dbReference type="Pfam" id="PF08264">
    <property type="entry name" value="Anticodon_1"/>
    <property type="match status" value="1"/>
</dbReference>
<dbReference type="Pfam" id="PF00133">
    <property type="entry name" value="tRNA-synt_1"/>
    <property type="match status" value="1"/>
</dbReference>
<dbReference type="Pfam" id="PF06827">
    <property type="entry name" value="zf-FPG_IleRS"/>
    <property type="match status" value="1"/>
</dbReference>
<dbReference type="PRINTS" id="PR00984">
    <property type="entry name" value="TRNASYNTHILE"/>
</dbReference>
<dbReference type="SUPFAM" id="SSF47323">
    <property type="entry name" value="Anticodon-binding domain of a subclass of class I aminoacyl-tRNA synthetases"/>
    <property type="match status" value="1"/>
</dbReference>
<dbReference type="SUPFAM" id="SSF52374">
    <property type="entry name" value="Nucleotidylyl transferase"/>
    <property type="match status" value="1"/>
</dbReference>
<dbReference type="SUPFAM" id="SSF50677">
    <property type="entry name" value="ValRS/IleRS/LeuRS editing domain"/>
    <property type="match status" value="1"/>
</dbReference>
<dbReference type="PROSITE" id="PS00178">
    <property type="entry name" value="AA_TRNA_LIGASE_I"/>
    <property type="match status" value="1"/>
</dbReference>
<organism>
    <name type="scientific">Bacillus cereus (strain 03BB102)</name>
    <dbReference type="NCBI Taxonomy" id="572264"/>
    <lineage>
        <taxon>Bacteria</taxon>
        <taxon>Bacillati</taxon>
        <taxon>Bacillota</taxon>
        <taxon>Bacilli</taxon>
        <taxon>Bacillales</taxon>
        <taxon>Bacillaceae</taxon>
        <taxon>Bacillus</taxon>
        <taxon>Bacillus cereus group</taxon>
    </lineage>
</organism>
<comment type="function">
    <text evidence="1">Catalyzes the attachment of isoleucine to tRNA(Ile). As IleRS can inadvertently accommodate and process structurally similar amino acids such as valine, to avoid such errors it has two additional distinct tRNA(Ile)-dependent editing activities. One activity is designated as 'pretransfer' editing and involves the hydrolysis of activated Val-AMP. The other activity is designated 'posttransfer' editing and involves deacylation of mischarged Val-tRNA(Ile).</text>
</comment>
<comment type="catalytic activity">
    <reaction evidence="1">
        <text>tRNA(Ile) + L-isoleucine + ATP = L-isoleucyl-tRNA(Ile) + AMP + diphosphate</text>
        <dbReference type="Rhea" id="RHEA:11060"/>
        <dbReference type="Rhea" id="RHEA-COMP:9666"/>
        <dbReference type="Rhea" id="RHEA-COMP:9695"/>
        <dbReference type="ChEBI" id="CHEBI:30616"/>
        <dbReference type="ChEBI" id="CHEBI:33019"/>
        <dbReference type="ChEBI" id="CHEBI:58045"/>
        <dbReference type="ChEBI" id="CHEBI:78442"/>
        <dbReference type="ChEBI" id="CHEBI:78528"/>
        <dbReference type="ChEBI" id="CHEBI:456215"/>
        <dbReference type="EC" id="6.1.1.5"/>
    </reaction>
</comment>
<comment type="cofactor">
    <cofactor evidence="1">
        <name>Zn(2+)</name>
        <dbReference type="ChEBI" id="CHEBI:29105"/>
    </cofactor>
    <text evidence="1">Binds 1 zinc ion per subunit.</text>
</comment>
<comment type="subunit">
    <text evidence="1">Monomer.</text>
</comment>
<comment type="subcellular location">
    <subcellularLocation>
        <location evidence="1">Cytoplasm</location>
    </subcellularLocation>
</comment>
<comment type="domain">
    <text evidence="1">IleRS has two distinct active sites: one for aminoacylation and one for editing. The misactivated valine is translocated from the active site to the editing site, which sterically excludes the correctly activated isoleucine. The single editing site contains two valyl binding pockets, one specific for each substrate (Val-AMP or Val-tRNA(Ile)).</text>
</comment>
<comment type="similarity">
    <text evidence="1">Belongs to the class-I aminoacyl-tRNA synthetase family. IleS type 1 subfamily.</text>
</comment>
<evidence type="ECO:0000255" key="1">
    <source>
        <dbReference type="HAMAP-Rule" id="MF_02002"/>
    </source>
</evidence>
<accession>C1EPQ9</accession>
<reference key="1">
    <citation type="submission" date="2009-02" db="EMBL/GenBank/DDBJ databases">
        <title>Genome sequence of Bacillus cereus 03BB102.</title>
        <authorList>
            <person name="Dodson R.J."/>
            <person name="Jackson P."/>
            <person name="Munk A.C."/>
            <person name="Brettin T."/>
            <person name="Bruce D."/>
            <person name="Detter C."/>
            <person name="Tapia R."/>
            <person name="Han C."/>
            <person name="Sutton G."/>
            <person name="Sims D."/>
        </authorList>
    </citation>
    <scope>NUCLEOTIDE SEQUENCE [LARGE SCALE GENOMIC DNA]</scope>
    <source>
        <strain>03BB102</strain>
    </source>
</reference>
<proteinExistence type="inferred from homology"/>
<name>SYI_BACC3</name>